<sequence length="67" mass="7322">MAQGTVKWFNAEKGFGFISTENGQDVFAHFSAIQTNGFKTLEEGQKVAFDVEEGQRGPQAVNITKLA</sequence>
<proteinExistence type="inferred from homology"/>
<keyword id="KW-0010">Activator</keyword>
<keyword id="KW-0963">Cytoplasm</keyword>
<keyword id="KW-0238">DNA-binding</keyword>
<keyword id="KW-0346">Stress response</keyword>
<keyword id="KW-0804">Transcription</keyword>
<keyword id="KW-0805">Transcription regulation</keyword>
<organism>
    <name type="scientific">Streptococcus pyogenes serotype M18 (strain MGAS8232)</name>
    <dbReference type="NCBI Taxonomy" id="186103"/>
    <lineage>
        <taxon>Bacteria</taxon>
        <taxon>Bacillati</taxon>
        <taxon>Bacillota</taxon>
        <taxon>Bacilli</taxon>
        <taxon>Lactobacillales</taxon>
        <taxon>Streptococcaceae</taxon>
        <taxon>Streptococcus</taxon>
    </lineage>
</organism>
<comment type="subunit">
    <text evidence="1">Homodimer.</text>
</comment>
<comment type="subcellular location">
    <subcellularLocation>
        <location evidence="1">Cytoplasm</location>
    </subcellularLocation>
</comment>
<comment type="induction">
    <text evidence="1">In response to low temperature.</text>
</comment>
<reference key="1">
    <citation type="journal article" date="2002" name="Proc. Natl. Acad. Sci. U.S.A.">
        <title>Genome sequence and comparative microarray analysis of serotype M18 group A Streptococcus strains associated with acute rheumatic fever outbreaks.</title>
        <authorList>
            <person name="Smoot J.C."/>
            <person name="Barbian K.D."/>
            <person name="Van Gompel J.J."/>
            <person name="Smoot L.M."/>
            <person name="Chaussee M.S."/>
            <person name="Sylva G.L."/>
            <person name="Sturdevant D.E."/>
            <person name="Ricklefs S.M."/>
            <person name="Porcella S.F."/>
            <person name="Parkins L.D."/>
            <person name="Beres S.B."/>
            <person name="Campbell D.S."/>
            <person name="Smith T.M."/>
            <person name="Zhang Q."/>
            <person name="Kapur V."/>
            <person name="Daly J.A."/>
            <person name="Veasy L.G."/>
            <person name="Musser J.M."/>
        </authorList>
    </citation>
    <scope>NUCLEOTIDE SEQUENCE [LARGE SCALE GENOMIC DNA]</scope>
    <source>
        <strain>MGAS8232</strain>
    </source>
</reference>
<evidence type="ECO:0000250" key="1"/>
<gene>
    <name type="primary">cspA</name>
    <name type="synonym">csp</name>
    <name type="synonym">cspC</name>
    <name type="ordered locus">spyM18_2136</name>
</gene>
<feature type="chain" id="PRO_0000100337" description="Major cold shock protein">
    <location>
        <begin position="1"/>
        <end position="67"/>
    </location>
</feature>
<feature type="domain" description="CSD">
    <location>
        <begin position="4"/>
        <end position="63"/>
    </location>
</feature>
<accession>P0A361</accession>
<accession>Q54974</accession>
<dbReference type="EMBL" id="AE009949">
    <property type="protein sequence ID" value="AAL98586.1"/>
    <property type="molecule type" value="Genomic_DNA"/>
</dbReference>
<dbReference type="RefSeq" id="WP_002991299.1">
    <property type="nucleotide sequence ID" value="NC_003485.1"/>
</dbReference>
<dbReference type="SMR" id="P0A361"/>
<dbReference type="KEGG" id="spm:spyM18_2136"/>
<dbReference type="HOGENOM" id="CLU_117621_6_1_9"/>
<dbReference type="GO" id="GO:0005737">
    <property type="term" value="C:cytoplasm"/>
    <property type="evidence" value="ECO:0007669"/>
    <property type="project" value="UniProtKB-SubCell"/>
</dbReference>
<dbReference type="GO" id="GO:0003677">
    <property type="term" value="F:DNA binding"/>
    <property type="evidence" value="ECO:0007669"/>
    <property type="project" value="UniProtKB-KW"/>
</dbReference>
<dbReference type="CDD" id="cd04458">
    <property type="entry name" value="CSP_CDS"/>
    <property type="match status" value="1"/>
</dbReference>
<dbReference type="FunFam" id="2.40.50.140:FF:000006">
    <property type="entry name" value="Cold shock protein CspC"/>
    <property type="match status" value="1"/>
</dbReference>
<dbReference type="Gene3D" id="6.20.370.130">
    <property type="match status" value="1"/>
</dbReference>
<dbReference type="Gene3D" id="2.40.50.140">
    <property type="entry name" value="Nucleic acid-binding proteins"/>
    <property type="match status" value="1"/>
</dbReference>
<dbReference type="InterPro" id="IPR012156">
    <property type="entry name" value="Cold_shock_CspA"/>
</dbReference>
<dbReference type="InterPro" id="IPR050181">
    <property type="entry name" value="Cold_shock_domain"/>
</dbReference>
<dbReference type="InterPro" id="IPR011129">
    <property type="entry name" value="CSD"/>
</dbReference>
<dbReference type="InterPro" id="IPR019844">
    <property type="entry name" value="CSD_CS"/>
</dbReference>
<dbReference type="InterPro" id="IPR002059">
    <property type="entry name" value="CSP_DNA-bd"/>
</dbReference>
<dbReference type="InterPro" id="IPR012340">
    <property type="entry name" value="NA-bd_OB-fold"/>
</dbReference>
<dbReference type="PANTHER" id="PTHR11544">
    <property type="entry name" value="COLD SHOCK DOMAIN CONTAINING PROTEINS"/>
    <property type="match status" value="1"/>
</dbReference>
<dbReference type="Pfam" id="PF00313">
    <property type="entry name" value="CSD"/>
    <property type="match status" value="1"/>
</dbReference>
<dbReference type="PIRSF" id="PIRSF002599">
    <property type="entry name" value="Cold_shock_A"/>
    <property type="match status" value="1"/>
</dbReference>
<dbReference type="PRINTS" id="PR00050">
    <property type="entry name" value="COLDSHOCK"/>
</dbReference>
<dbReference type="SMART" id="SM00357">
    <property type="entry name" value="CSP"/>
    <property type="match status" value="1"/>
</dbReference>
<dbReference type="SUPFAM" id="SSF50249">
    <property type="entry name" value="Nucleic acid-binding proteins"/>
    <property type="match status" value="1"/>
</dbReference>
<dbReference type="PROSITE" id="PS00352">
    <property type="entry name" value="CSD_1"/>
    <property type="match status" value="1"/>
</dbReference>
<dbReference type="PROSITE" id="PS51857">
    <property type="entry name" value="CSD_2"/>
    <property type="match status" value="1"/>
</dbReference>
<protein>
    <recommendedName>
        <fullName>Major cold shock protein</fullName>
    </recommendedName>
</protein>
<name>CSPA_STRP8</name>